<dbReference type="EC" id="5.3.1.9" evidence="1"/>
<dbReference type="EMBL" id="CP001182">
    <property type="protein sequence ID" value="ACJ39544.1"/>
    <property type="molecule type" value="Genomic_DNA"/>
</dbReference>
<dbReference type="RefSeq" id="WP_000045509.1">
    <property type="nucleotide sequence ID" value="NC_011586.2"/>
</dbReference>
<dbReference type="SMR" id="B7IBR9"/>
<dbReference type="KEGG" id="abn:AB57_06160"/>
<dbReference type="HOGENOM" id="CLU_017947_3_1_6"/>
<dbReference type="UniPathway" id="UPA00109">
    <property type="reaction ID" value="UER00181"/>
</dbReference>
<dbReference type="UniPathway" id="UPA00138"/>
<dbReference type="Proteomes" id="UP000007094">
    <property type="component" value="Chromosome"/>
</dbReference>
<dbReference type="GO" id="GO:0005829">
    <property type="term" value="C:cytosol"/>
    <property type="evidence" value="ECO:0007669"/>
    <property type="project" value="TreeGrafter"/>
</dbReference>
<dbReference type="GO" id="GO:0097367">
    <property type="term" value="F:carbohydrate derivative binding"/>
    <property type="evidence" value="ECO:0007669"/>
    <property type="project" value="InterPro"/>
</dbReference>
<dbReference type="GO" id="GO:0004347">
    <property type="term" value="F:glucose-6-phosphate isomerase activity"/>
    <property type="evidence" value="ECO:0007669"/>
    <property type="project" value="UniProtKB-UniRule"/>
</dbReference>
<dbReference type="GO" id="GO:0048029">
    <property type="term" value="F:monosaccharide binding"/>
    <property type="evidence" value="ECO:0007669"/>
    <property type="project" value="TreeGrafter"/>
</dbReference>
<dbReference type="GO" id="GO:0006094">
    <property type="term" value="P:gluconeogenesis"/>
    <property type="evidence" value="ECO:0007669"/>
    <property type="project" value="UniProtKB-UniRule"/>
</dbReference>
<dbReference type="GO" id="GO:0051156">
    <property type="term" value="P:glucose 6-phosphate metabolic process"/>
    <property type="evidence" value="ECO:0007669"/>
    <property type="project" value="TreeGrafter"/>
</dbReference>
<dbReference type="GO" id="GO:0006096">
    <property type="term" value="P:glycolytic process"/>
    <property type="evidence" value="ECO:0007669"/>
    <property type="project" value="UniProtKB-UniRule"/>
</dbReference>
<dbReference type="CDD" id="cd05015">
    <property type="entry name" value="SIS_PGI_1"/>
    <property type="match status" value="1"/>
</dbReference>
<dbReference type="CDD" id="cd05016">
    <property type="entry name" value="SIS_PGI_2"/>
    <property type="match status" value="1"/>
</dbReference>
<dbReference type="Gene3D" id="1.10.1390.10">
    <property type="match status" value="1"/>
</dbReference>
<dbReference type="Gene3D" id="3.40.50.10490">
    <property type="entry name" value="Glucose-6-phosphate isomerase like protein, domain 1"/>
    <property type="match status" value="2"/>
</dbReference>
<dbReference type="HAMAP" id="MF_00473">
    <property type="entry name" value="G6P_isomerase"/>
    <property type="match status" value="1"/>
</dbReference>
<dbReference type="InterPro" id="IPR001672">
    <property type="entry name" value="G6P_Isomerase"/>
</dbReference>
<dbReference type="InterPro" id="IPR023096">
    <property type="entry name" value="G6P_Isomerase_C"/>
</dbReference>
<dbReference type="InterPro" id="IPR018189">
    <property type="entry name" value="Phosphoglucose_isomerase_CS"/>
</dbReference>
<dbReference type="InterPro" id="IPR046348">
    <property type="entry name" value="SIS_dom_sf"/>
</dbReference>
<dbReference type="InterPro" id="IPR035476">
    <property type="entry name" value="SIS_PGI_1"/>
</dbReference>
<dbReference type="InterPro" id="IPR035482">
    <property type="entry name" value="SIS_PGI_2"/>
</dbReference>
<dbReference type="NCBIfam" id="NF001211">
    <property type="entry name" value="PRK00179.1"/>
    <property type="match status" value="1"/>
</dbReference>
<dbReference type="PANTHER" id="PTHR11469">
    <property type="entry name" value="GLUCOSE-6-PHOSPHATE ISOMERASE"/>
    <property type="match status" value="1"/>
</dbReference>
<dbReference type="PANTHER" id="PTHR11469:SF1">
    <property type="entry name" value="GLUCOSE-6-PHOSPHATE ISOMERASE"/>
    <property type="match status" value="1"/>
</dbReference>
<dbReference type="Pfam" id="PF00342">
    <property type="entry name" value="PGI"/>
    <property type="match status" value="1"/>
</dbReference>
<dbReference type="PRINTS" id="PR00662">
    <property type="entry name" value="G6PISOMERASE"/>
</dbReference>
<dbReference type="SUPFAM" id="SSF53697">
    <property type="entry name" value="SIS domain"/>
    <property type="match status" value="1"/>
</dbReference>
<dbReference type="PROSITE" id="PS00765">
    <property type="entry name" value="P_GLUCOSE_ISOMERASE_1"/>
    <property type="match status" value="1"/>
</dbReference>
<dbReference type="PROSITE" id="PS00174">
    <property type="entry name" value="P_GLUCOSE_ISOMERASE_2"/>
    <property type="match status" value="1"/>
</dbReference>
<dbReference type="PROSITE" id="PS51463">
    <property type="entry name" value="P_GLUCOSE_ISOMERASE_3"/>
    <property type="match status" value="1"/>
</dbReference>
<evidence type="ECO:0000255" key="1">
    <source>
        <dbReference type="HAMAP-Rule" id="MF_00473"/>
    </source>
</evidence>
<name>G6PI_ACIB5</name>
<reference key="1">
    <citation type="journal article" date="2008" name="J. Bacteriol.">
        <title>Comparative genome sequence analysis of multidrug-resistant Acinetobacter baumannii.</title>
        <authorList>
            <person name="Adams M.D."/>
            <person name="Goglin K."/>
            <person name="Molyneaux N."/>
            <person name="Hujer K.M."/>
            <person name="Lavender H."/>
            <person name="Jamison J.J."/>
            <person name="MacDonald I.J."/>
            <person name="Martin K.M."/>
            <person name="Russo T."/>
            <person name="Campagnari A.A."/>
            <person name="Hujer A.M."/>
            <person name="Bonomo R.A."/>
            <person name="Gill S.R."/>
        </authorList>
    </citation>
    <scope>NUCLEOTIDE SEQUENCE [LARGE SCALE GENOMIC DNA]</scope>
    <source>
        <strain>AB0057</strain>
    </source>
</reference>
<comment type="function">
    <text evidence="1">Catalyzes the reversible isomerization of glucose-6-phosphate to fructose-6-phosphate.</text>
</comment>
<comment type="catalytic activity">
    <reaction evidence="1">
        <text>alpha-D-glucose 6-phosphate = beta-D-fructose 6-phosphate</text>
        <dbReference type="Rhea" id="RHEA:11816"/>
        <dbReference type="ChEBI" id="CHEBI:57634"/>
        <dbReference type="ChEBI" id="CHEBI:58225"/>
        <dbReference type="EC" id="5.3.1.9"/>
    </reaction>
</comment>
<comment type="pathway">
    <text evidence="1">Carbohydrate biosynthesis; gluconeogenesis.</text>
</comment>
<comment type="pathway">
    <text evidence="1">Carbohydrate degradation; glycolysis; D-glyceraldehyde 3-phosphate and glycerone phosphate from D-glucose: step 2/4.</text>
</comment>
<comment type="subcellular location">
    <subcellularLocation>
        <location evidence="1">Cytoplasm</location>
    </subcellularLocation>
</comment>
<comment type="similarity">
    <text evidence="1">Belongs to the GPI family.</text>
</comment>
<accession>B7IBR9</accession>
<organism>
    <name type="scientific">Acinetobacter baumannii (strain AB0057)</name>
    <dbReference type="NCBI Taxonomy" id="480119"/>
    <lineage>
        <taxon>Bacteria</taxon>
        <taxon>Pseudomonadati</taxon>
        <taxon>Pseudomonadota</taxon>
        <taxon>Gammaproteobacteria</taxon>
        <taxon>Moraxellales</taxon>
        <taxon>Moraxellaceae</taxon>
        <taxon>Acinetobacter</taxon>
        <taxon>Acinetobacter calcoaceticus/baumannii complex</taxon>
    </lineage>
</organism>
<keyword id="KW-0963">Cytoplasm</keyword>
<keyword id="KW-0312">Gluconeogenesis</keyword>
<keyword id="KW-0324">Glycolysis</keyword>
<keyword id="KW-0413">Isomerase</keyword>
<gene>
    <name evidence="1" type="primary">pgi</name>
    <name type="ordered locus">AB57_0113</name>
</gene>
<protein>
    <recommendedName>
        <fullName evidence="1">Glucose-6-phosphate isomerase</fullName>
        <shortName evidence="1">GPI</shortName>
        <ecNumber evidence="1">5.3.1.9</ecNumber>
    </recommendedName>
    <alternativeName>
        <fullName evidence="1">Phosphoglucose isomerase</fullName>
        <shortName evidence="1">PGI</shortName>
    </alternativeName>
    <alternativeName>
        <fullName evidence="1">Phosphohexose isomerase</fullName>
        <shortName evidence="1">PHI</shortName>
    </alternativeName>
</protein>
<proteinExistence type="inferred from homology"/>
<sequence length="556" mass="62941">MSKSIEQFPKDLSSPLIQIKSSVEKNSKLHIKELFALEPERFHNYSVKFDQLFFDYSKQRVTKNILEQLVALAKNKQLTQWINRLFSQDKINCTEQREAMHWALRLPSEYSKFPELTKQVHTQLQRMYTLVEKIHAGQYRGATGEVIQDVVNIGVGGSDLGPHMVTHALADFKVKTAKPLNVHFVSTMDGSQLSDLLHQLRPETTLFIISSKSFGTIDTLSNAQTVRQWLEKALGKHDRVVKSHFIGVSTKAEKMTEWGIIPDNQLLLWEWVGGRYSLWSCIGFPIALTIGIDGFQQLLAGAHAVDEHFQNTSFERNIPVLMALLGIWNNNFLNIQTHAVLPYDGRLKYFAAYLQQLEMESNGKSVQRDGQKVELDTCPIVWGEVGPNAQHAFYQLLHQGTQAVSCDFMAPIQRYNADHFTYVENAEALIEQHHLALSNCLAQSRLLAFGNEALDAAELKNLPIYKQYEGNQPSSTLLLKELNPYSLGMLIALYEHKVFVQSVIWNINPFDQWGVEKGKQIADQLLPILNGVQNDLSTLDASTRGLIKILLGKVDG</sequence>
<feature type="chain" id="PRO_1000125681" description="Glucose-6-phosphate isomerase">
    <location>
        <begin position="1"/>
        <end position="556"/>
    </location>
</feature>
<feature type="active site" description="Proton donor" evidence="1">
    <location>
        <position position="360"/>
    </location>
</feature>
<feature type="active site" evidence="1">
    <location>
        <position position="391"/>
    </location>
</feature>
<feature type="active site" evidence="1">
    <location>
        <position position="519"/>
    </location>
</feature>